<evidence type="ECO:0000255" key="1">
    <source>
        <dbReference type="HAMAP-Rule" id="MF_01554"/>
    </source>
</evidence>
<keyword id="KW-0413">Isomerase</keyword>
<keyword id="KW-0460">Magnesium</keyword>
<keyword id="KW-0479">Metal-binding</keyword>
<keyword id="KW-0597">Phosphoprotein</keyword>
<keyword id="KW-1185">Reference proteome</keyword>
<protein>
    <recommendedName>
        <fullName evidence="1">Phosphoglucosamine mutase</fullName>
        <ecNumber evidence="1">5.4.2.10</ecNumber>
    </recommendedName>
</protein>
<reference key="1">
    <citation type="journal article" date="2003" name="Proc. Natl. Acad. Sci. U.S.A.">
        <title>Reductive genome evolution in Buchnera aphidicola.</title>
        <authorList>
            <person name="van Ham R.C.H.J."/>
            <person name="Kamerbeek J."/>
            <person name="Palacios C."/>
            <person name="Rausell C."/>
            <person name="Abascal F."/>
            <person name="Bastolla U."/>
            <person name="Fernandez J.M."/>
            <person name="Jimenez L."/>
            <person name="Postigo M."/>
            <person name="Silva F.J."/>
            <person name="Tamames J."/>
            <person name="Viguera E."/>
            <person name="Latorre A."/>
            <person name="Valencia A."/>
            <person name="Moran F."/>
            <person name="Moya A."/>
        </authorList>
    </citation>
    <scope>NUCLEOTIDE SEQUENCE [LARGE SCALE GENOMIC DNA]</scope>
    <source>
        <strain>Bp</strain>
    </source>
</reference>
<accession>Q89AF3</accession>
<name>GLMM_BUCBP</name>
<organism>
    <name type="scientific">Buchnera aphidicola subsp. Baizongia pistaciae (strain Bp)</name>
    <dbReference type="NCBI Taxonomy" id="224915"/>
    <lineage>
        <taxon>Bacteria</taxon>
        <taxon>Pseudomonadati</taxon>
        <taxon>Pseudomonadota</taxon>
        <taxon>Gammaproteobacteria</taxon>
        <taxon>Enterobacterales</taxon>
        <taxon>Erwiniaceae</taxon>
        <taxon>Buchnera</taxon>
    </lineage>
</organism>
<gene>
    <name evidence="1" type="primary">glmM</name>
    <name type="synonym">mrsA</name>
    <name type="ordered locus">bbp_344</name>
</gene>
<comment type="function">
    <text evidence="1">Catalyzes the conversion of glucosamine-6-phosphate to glucosamine-1-phosphate.</text>
</comment>
<comment type="catalytic activity">
    <reaction evidence="1">
        <text>alpha-D-glucosamine 1-phosphate = D-glucosamine 6-phosphate</text>
        <dbReference type="Rhea" id="RHEA:23424"/>
        <dbReference type="ChEBI" id="CHEBI:58516"/>
        <dbReference type="ChEBI" id="CHEBI:58725"/>
        <dbReference type="EC" id="5.4.2.10"/>
    </reaction>
</comment>
<comment type="cofactor">
    <cofactor evidence="1">
        <name>Mg(2+)</name>
        <dbReference type="ChEBI" id="CHEBI:18420"/>
    </cofactor>
    <text evidence="1">Binds 1 Mg(2+) ion per subunit.</text>
</comment>
<comment type="PTM">
    <text evidence="1">Activated by phosphorylation.</text>
</comment>
<comment type="similarity">
    <text evidence="1">Belongs to the phosphohexose mutase family.</text>
</comment>
<dbReference type="EC" id="5.4.2.10" evidence="1"/>
<dbReference type="EMBL" id="AE016826">
    <property type="protein sequence ID" value="AAO27063.1"/>
    <property type="molecule type" value="Genomic_DNA"/>
</dbReference>
<dbReference type="RefSeq" id="WP_011091464.1">
    <property type="nucleotide sequence ID" value="NC_004545.1"/>
</dbReference>
<dbReference type="SMR" id="Q89AF3"/>
<dbReference type="STRING" id="224915.bbp_344"/>
<dbReference type="KEGG" id="bab:bbp_344"/>
<dbReference type="eggNOG" id="COG1109">
    <property type="taxonomic scope" value="Bacteria"/>
</dbReference>
<dbReference type="HOGENOM" id="CLU_016950_7_0_6"/>
<dbReference type="OrthoDB" id="9803322at2"/>
<dbReference type="Proteomes" id="UP000000601">
    <property type="component" value="Chromosome"/>
</dbReference>
<dbReference type="GO" id="GO:0005829">
    <property type="term" value="C:cytosol"/>
    <property type="evidence" value="ECO:0007669"/>
    <property type="project" value="TreeGrafter"/>
</dbReference>
<dbReference type="GO" id="GO:0000287">
    <property type="term" value="F:magnesium ion binding"/>
    <property type="evidence" value="ECO:0007669"/>
    <property type="project" value="UniProtKB-UniRule"/>
</dbReference>
<dbReference type="GO" id="GO:0008966">
    <property type="term" value="F:phosphoglucosamine mutase activity"/>
    <property type="evidence" value="ECO:0007669"/>
    <property type="project" value="UniProtKB-UniRule"/>
</dbReference>
<dbReference type="GO" id="GO:0004615">
    <property type="term" value="F:phosphomannomutase activity"/>
    <property type="evidence" value="ECO:0007669"/>
    <property type="project" value="TreeGrafter"/>
</dbReference>
<dbReference type="GO" id="GO:0005975">
    <property type="term" value="P:carbohydrate metabolic process"/>
    <property type="evidence" value="ECO:0007669"/>
    <property type="project" value="InterPro"/>
</dbReference>
<dbReference type="GO" id="GO:0009252">
    <property type="term" value="P:peptidoglycan biosynthetic process"/>
    <property type="evidence" value="ECO:0007669"/>
    <property type="project" value="TreeGrafter"/>
</dbReference>
<dbReference type="GO" id="GO:0006048">
    <property type="term" value="P:UDP-N-acetylglucosamine biosynthetic process"/>
    <property type="evidence" value="ECO:0007669"/>
    <property type="project" value="TreeGrafter"/>
</dbReference>
<dbReference type="CDD" id="cd05802">
    <property type="entry name" value="GlmM"/>
    <property type="match status" value="1"/>
</dbReference>
<dbReference type="FunFam" id="3.40.120.10:FF:000001">
    <property type="entry name" value="Phosphoglucosamine mutase"/>
    <property type="match status" value="1"/>
</dbReference>
<dbReference type="FunFam" id="3.40.120.10:FF:000003">
    <property type="entry name" value="Phosphoglucosamine mutase"/>
    <property type="match status" value="1"/>
</dbReference>
<dbReference type="Gene3D" id="3.40.120.10">
    <property type="entry name" value="Alpha-D-Glucose-1,6-Bisphosphate, subunit A, domain 3"/>
    <property type="match status" value="3"/>
</dbReference>
<dbReference type="Gene3D" id="3.30.310.50">
    <property type="entry name" value="Alpha-D-phosphohexomutase, C-terminal domain"/>
    <property type="match status" value="1"/>
</dbReference>
<dbReference type="HAMAP" id="MF_01554_B">
    <property type="entry name" value="GlmM_B"/>
    <property type="match status" value="1"/>
</dbReference>
<dbReference type="InterPro" id="IPR005844">
    <property type="entry name" value="A-D-PHexomutase_a/b/a-I"/>
</dbReference>
<dbReference type="InterPro" id="IPR016055">
    <property type="entry name" value="A-D-PHexomutase_a/b/a-I/II/III"/>
</dbReference>
<dbReference type="InterPro" id="IPR005845">
    <property type="entry name" value="A-D-PHexomutase_a/b/a-II"/>
</dbReference>
<dbReference type="InterPro" id="IPR005846">
    <property type="entry name" value="A-D-PHexomutase_a/b/a-III"/>
</dbReference>
<dbReference type="InterPro" id="IPR036900">
    <property type="entry name" value="A-D-PHexomutase_C_sf"/>
</dbReference>
<dbReference type="InterPro" id="IPR005841">
    <property type="entry name" value="Alpha-D-phosphohexomutase_SF"/>
</dbReference>
<dbReference type="InterPro" id="IPR006352">
    <property type="entry name" value="GlmM_bact"/>
</dbReference>
<dbReference type="InterPro" id="IPR050060">
    <property type="entry name" value="Phosphoglucosamine_mutase"/>
</dbReference>
<dbReference type="NCBIfam" id="TIGR01455">
    <property type="entry name" value="glmM"/>
    <property type="match status" value="1"/>
</dbReference>
<dbReference type="NCBIfam" id="NF008139">
    <property type="entry name" value="PRK10887.1"/>
    <property type="match status" value="1"/>
</dbReference>
<dbReference type="PANTHER" id="PTHR42946:SF1">
    <property type="entry name" value="PHOSPHOGLUCOMUTASE (ALPHA-D-GLUCOSE-1,6-BISPHOSPHATE-DEPENDENT)"/>
    <property type="match status" value="1"/>
</dbReference>
<dbReference type="PANTHER" id="PTHR42946">
    <property type="entry name" value="PHOSPHOHEXOSE MUTASE"/>
    <property type="match status" value="1"/>
</dbReference>
<dbReference type="Pfam" id="PF02878">
    <property type="entry name" value="PGM_PMM_I"/>
    <property type="match status" value="1"/>
</dbReference>
<dbReference type="Pfam" id="PF02879">
    <property type="entry name" value="PGM_PMM_II"/>
    <property type="match status" value="1"/>
</dbReference>
<dbReference type="Pfam" id="PF02880">
    <property type="entry name" value="PGM_PMM_III"/>
    <property type="match status" value="1"/>
</dbReference>
<dbReference type="PRINTS" id="PR00509">
    <property type="entry name" value="PGMPMM"/>
</dbReference>
<dbReference type="SUPFAM" id="SSF55957">
    <property type="entry name" value="Phosphoglucomutase, C-terminal domain"/>
    <property type="match status" value="1"/>
</dbReference>
<dbReference type="SUPFAM" id="SSF53738">
    <property type="entry name" value="Phosphoglucomutase, first 3 domains"/>
    <property type="match status" value="3"/>
</dbReference>
<sequence length="453" mass="50698">MIKYFGTDGIRGVVGKTPITADFFFKLGAVIGKILYFYDVKKIIIGRDTRLSSYMLEEALQFGLSLVGVSVISVGVLPTPAISYFTKLFNLEVGVVISASHNQFRDNGIKFFVKNGVKLSAKFERRIEKQLNKTIILKQFVDLGHISYKRALQQKYINFCISTLPNNFRLNNFKIVLDCANGSTYELAPIIFRELGANVVLMSAAPNGLNINDKCGTTDLQEIQRLVLSEKADLGISFDGDGDRVIMIDHFGNSVNGDQILYILAKNYKKNKKLRGGVVGTKMSNGGLSLALSKIGIPFITVNIGDRYIFKKLKEKQWRLGAESSGHVILLDYAPVGDGIITSLQILKIIFDENSTLKSLCSDIHMLPQIIINIKNNIDISFLKNFKIQSVLSKYKDFLGKYSRIMLRLSGTEKCIRIMIEGCCSKKINIFSKMLINVINSVKKSRFSIITMF</sequence>
<feature type="chain" id="PRO_0000147861" description="Phosphoglucosamine mutase">
    <location>
        <begin position="1"/>
        <end position="453"/>
    </location>
</feature>
<feature type="active site" description="Phosphoserine intermediate" evidence="1">
    <location>
        <position position="100"/>
    </location>
</feature>
<feature type="binding site" description="via phosphate group" evidence="1">
    <location>
        <position position="100"/>
    </location>
    <ligand>
        <name>Mg(2+)</name>
        <dbReference type="ChEBI" id="CHEBI:18420"/>
    </ligand>
</feature>
<feature type="binding site" evidence="1">
    <location>
        <position position="239"/>
    </location>
    <ligand>
        <name>Mg(2+)</name>
        <dbReference type="ChEBI" id="CHEBI:18420"/>
    </ligand>
</feature>
<feature type="binding site" evidence="1">
    <location>
        <position position="241"/>
    </location>
    <ligand>
        <name>Mg(2+)</name>
        <dbReference type="ChEBI" id="CHEBI:18420"/>
    </ligand>
</feature>
<feature type="binding site" evidence="1">
    <location>
        <position position="243"/>
    </location>
    <ligand>
        <name>Mg(2+)</name>
        <dbReference type="ChEBI" id="CHEBI:18420"/>
    </ligand>
</feature>
<feature type="modified residue" description="Phosphoserine" evidence="1">
    <location>
        <position position="100"/>
    </location>
</feature>
<proteinExistence type="inferred from homology"/>